<evidence type="ECO:0000250" key="1">
    <source>
        <dbReference type="UniProtKB" id="Q9NY26"/>
    </source>
</evidence>
<evidence type="ECO:0000255" key="2"/>
<evidence type="ECO:0000305" key="3"/>
<proteinExistence type="evidence at transcript level"/>
<name>S39A1_BOVIN</name>
<reference key="1">
    <citation type="submission" date="2005-08" db="EMBL/GenBank/DDBJ databases">
        <authorList>
            <consortium name="NIH - Mammalian Gene Collection (MGC) project"/>
        </authorList>
    </citation>
    <scope>NUCLEOTIDE SEQUENCE [LARGE SCALE MRNA]</scope>
    <source>
        <strain>Crossbred X Angus</strain>
        <tissue>Ileum</tissue>
    </source>
</reference>
<gene>
    <name type="primary">SLC39A1</name>
    <name type="synonym">ZIP1</name>
</gene>
<dbReference type="EMBL" id="BC103384">
    <property type="protein sequence ID" value="AAI03385.1"/>
    <property type="molecule type" value="mRNA"/>
</dbReference>
<dbReference type="RefSeq" id="NP_001030458.1">
    <property type="nucleotide sequence ID" value="NM_001035381.2"/>
</dbReference>
<dbReference type="SMR" id="Q3SYU3"/>
<dbReference type="FunCoup" id="Q3SYU3">
    <property type="interactions" value="1910"/>
</dbReference>
<dbReference type="STRING" id="9913.ENSBTAP00000033917"/>
<dbReference type="PaxDb" id="9913-ENSBTAP00000033917"/>
<dbReference type="Ensembl" id="ENSBTAT00000034015.5">
    <property type="protein sequence ID" value="ENSBTAP00000033917.4"/>
    <property type="gene ID" value="ENSBTAG00000011284.7"/>
</dbReference>
<dbReference type="GeneID" id="530352"/>
<dbReference type="KEGG" id="bta:530352"/>
<dbReference type="CTD" id="27173"/>
<dbReference type="VEuPathDB" id="HostDB:ENSBTAG00000011284"/>
<dbReference type="VGNC" id="VGNC:34857">
    <property type="gene designation" value="SLC39A1"/>
</dbReference>
<dbReference type="eggNOG" id="KOG1558">
    <property type="taxonomic scope" value="Eukaryota"/>
</dbReference>
<dbReference type="GeneTree" id="ENSGT00940000157062"/>
<dbReference type="HOGENOM" id="CLU_040462_1_0_1"/>
<dbReference type="InParanoid" id="Q3SYU3"/>
<dbReference type="OMA" id="HEMSHTH"/>
<dbReference type="OrthoDB" id="448280at2759"/>
<dbReference type="TreeFam" id="TF317098"/>
<dbReference type="Reactome" id="R-BTA-442380">
    <property type="pathway name" value="Zinc influx into cells by the SLC39 gene family"/>
</dbReference>
<dbReference type="Proteomes" id="UP000009136">
    <property type="component" value="Chromosome 3"/>
</dbReference>
<dbReference type="Bgee" id="ENSBTAG00000011284">
    <property type="expression patterns" value="Expressed in placenta and 105 other cell types or tissues"/>
</dbReference>
<dbReference type="GO" id="GO:0005789">
    <property type="term" value="C:endoplasmic reticulum membrane"/>
    <property type="evidence" value="ECO:0007669"/>
    <property type="project" value="UniProtKB-SubCell"/>
</dbReference>
<dbReference type="GO" id="GO:0005886">
    <property type="term" value="C:plasma membrane"/>
    <property type="evidence" value="ECO:0000250"/>
    <property type="project" value="UniProtKB"/>
</dbReference>
<dbReference type="GO" id="GO:0005385">
    <property type="term" value="F:zinc ion transmembrane transporter activity"/>
    <property type="evidence" value="ECO:0000318"/>
    <property type="project" value="GO_Central"/>
</dbReference>
<dbReference type="GO" id="GO:0071577">
    <property type="term" value="P:zinc ion transmembrane transport"/>
    <property type="evidence" value="ECO:0000250"/>
    <property type="project" value="UniProtKB"/>
</dbReference>
<dbReference type="InterPro" id="IPR003689">
    <property type="entry name" value="ZIP"/>
</dbReference>
<dbReference type="PANTHER" id="PTHR11040:SF58">
    <property type="entry name" value="ZINC TRANSPORTER ZIP1"/>
    <property type="match status" value="1"/>
</dbReference>
<dbReference type="PANTHER" id="PTHR11040">
    <property type="entry name" value="ZINC/IRON TRANSPORTER"/>
    <property type="match status" value="1"/>
</dbReference>
<dbReference type="Pfam" id="PF02535">
    <property type="entry name" value="Zip"/>
    <property type="match status" value="1"/>
</dbReference>
<keyword id="KW-1003">Cell membrane</keyword>
<keyword id="KW-0256">Endoplasmic reticulum</keyword>
<keyword id="KW-0406">Ion transport</keyword>
<keyword id="KW-0472">Membrane</keyword>
<keyword id="KW-1185">Reference proteome</keyword>
<keyword id="KW-0812">Transmembrane</keyword>
<keyword id="KW-1133">Transmembrane helix</keyword>
<keyword id="KW-0813">Transport</keyword>
<keyword id="KW-0862">Zinc</keyword>
<keyword id="KW-0864">Zinc transport</keyword>
<accession>Q3SYU3</accession>
<feature type="chain" id="PRO_0000283726" description="Zinc transporter ZIP1">
    <location>
        <begin position="1"/>
        <end position="324"/>
    </location>
</feature>
<feature type="topological domain" description="Extracellular" evidence="2">
    <location>
        <begin position="1"/>
        <end position="30"/>
    </location>
</feature>
<feature type="transmembrane region" description="Helical" evidence="2">
    <location>
        <begin position="31"/>
        <end position="51"/>
    </location>
</feature>
<feature type="topological domain" description="Cytoplasmic" evidence="2">
    <location>
        <begin position="52"/>
        <end position="68"/>
    </location>
</feature>
<feature type="transmembrane region" description="Helical" evidence="2">
    <location>
        <begin position="69"/>
        <end position="89"/>
    </location>
</feature>
<feature type="topological domain" description="Extracellular" evidence="2">
    <location>
        <begin position="90"/>
        <end position="104"/>
    </location>
</feature>
<feature type="transmembrane region" description="Helical" evidence="2">
    <location>
        <begin position="105"/>
        <end position="125"/>
    </location>
</feature>
<feature type="topological domain" description="Cytoplasmic" evidence="2">
    <location>
        <begin position="126"/>
        <end position="179"/>
    </location>
</feature>
<feature type="transmembrane region" description="Helical" evidence="2">
    <location>
        <begin position="180"/>
        <end position="200"/>
    </location>
</feature>
<feature type="topological domain" description="Extracellular" evidence="2">
    <location>
        <begin position="201"/>
        <end position="206"/>
    </location>
</feature>
<feature type="transmembrane region" description="Helical" evidence="2">
    <location>
        <begin position="207"/>
        <end position="227"/>
    </location>
</feature>
<feature type="topological domain" description="Cytoplasmic" evidence="2">
    <location>
        <begin position="228"/>
        <end position="237"/>
    </location>
</feature>
<feature type="transmembrane region" description="Helical" evidence="2">
    <location>
        <begin position="238"/>
        <end position="258"/>
    </location>
</feature>
<feature type="topological domain" description="Extracellular" evidence="2">
    <location>
        <begin position="259"/>
        <end position="272"/>
    </location>
</feature>
<feature type="transmembrane region" description="Helical" evidence="2">
    <location>
        <begin position="273"/>
        <end position="293"/>
    </location>
</feature>
<feature type="topological domain" description="Cytoplasmic" evidence="2">
    <location>
        <begin position="294"/>
        <end position="303"/>
    </location>
</feature>
<feature type="transmembrane region" description="Helical" evidence="2">
    <location>
        <begin position="304"/>
        <end position="324"/>
    </location>
</feature>
<sequence length="324" mass="34205">MGPWGEPELLVWRPEAAASEAPVPMGLEVKLGALVLLLVLTLICSLVPVCVLRRPGANPEASASRQKALSLVSCFAGGVFLATCLLDLLPDYLGAIDEALAALHVTLQFPLQEFILAMGFFLVLVMEQITLAYKEQSGPPPREETRALLGTVNGGPQHWHDGLGVPQAGGASSAPSALRACVLVFSLALHSVFEGLAVGLQRDQARAMELCLALLLHKGILAVSLSLRLLQSHLRAQVVAGCGILFSCMTPLGIGLGTALAESAGPLHQLAQSVLEGMAAGTFLYITFLEILPQELATSEQRILKVILLLAGFALLTGLLFIQI</sequence>
<organism>
    <name type="scientific">Bos taurus</name>
    <name type="common">Bovine</name>
    <dbReference type="NCBI Taxonomy" id="9913"/>
    <lineage>
        <taxon>Eukaryota</taxon>
        <taxon>Metazoa</taxon>
        <taxon>Chordata</taxon>
        <taxon>Craniata</taxon>
        <taxon>Vertebrata</taxon>
        <taxon>Euteleostomi</taxon>
        <taxon>Mammalia</taxon>
        <taxon>Eutheria</taxon>
        <taxon>Laurasiatheria</taxon>
        <taxon>Artiodactyla</taxon>
        <taxon>Ruminantia</taxon>
        <taxon>Pecora</taxon>
        <taxon>Bovidae</taxon>
        <taxon>Bovinae</taxon>
        <taxon>Bos</taxon>
    </lineage>
</organism>
<comment type="function">
    <text evidence="1">Transporter for the divalent cation Zn(2+). Mediates the influx of Zn(2+) into cells from extracellular space.</text>
</comment>
<comment type="catalytic activity">
    <reaction evidence="1">
        <text>Zn(2+)(in) = Zn(2+)(out)</text>
        <dbReference type="Rhea" id="RHEA:29351"/>
        <dbReference type="ChEBI" id="CHEBI:29105"/>
    </reaction>
    <physiologicalReaction direction="left-to-right" evidence="1">
        <dbReference type="Rhea" id="RHEA:29352"/>
    </physiologicalReaction>
</comment>
<comment type="subcellular location">
    <subcellularLocation>
        <location evidence="1">Cell membrane</location>
        <topology evidence="2">Multi-pass membrane protein</topology>
    </subcellularLocation>
    <subcellularLocation>
        <location evidence="1">Endoplasmic reticulum membrane</location>
        <topology evidence="2">Multi-pass membrane protein</topology>
    </subcellularLocation>
    <text evidence="1">Shows a vesicular localization corresponding partially to the endoplasmic reticulum in several epithelial cell lines.</text>
</comment>
<comment type="similarity">
    <text evidence="3">Belongs to the ZIP transporter (TC 2.A.5) family.</text>
</comment>
<protein>
    <recommendedName>
        <fullName>Zinc transporter ZIP1</fullName>
    </recommendedName>
    <alternativeName>
        <fullName>Solute carrier family 39 member 1</fullName>
    </alternativeName>
    <alternativeName>
        <fullName>Zrt- and Irt-like protein 1</fullName>
        <shortName>ZIP-1</shortName>
    </alternativeName>
</protein>